<sequence>MARFSIVFAAAGVLLLVAMAPVSEASTTTIITTIIEENPYGRGRTESGCYQQMEEAEMLNHCGMYLMKNLGERSQVSPRMREEDHKQLCCMQLKNLDEKCMCPAIMMMLNEPMWIRMRDQVMSMAHNLPIECNLMSQPCQM</sequence>
<protein>
    <recommendedName>
        <fullName>Albumin-8</fullName>
    </recommendedName>
    <alternativeName>
        <fullName>Methionine-rich 2S protein</fullName>
    </alternativeName>
    <alternativeName>
        <fullName>SFA8</fullName>
    </alternativeName>
</protein>
<keyword id="KW-0002">3D-structure</keyword>
<keyword id="KW-0903">Direct protein sequencing</keyword>
<keyword id="KW-1015">Disulfide bond</keyword>
<keyword id="KW-0708">Seed storage protein</keyword>
<keyword id="KW-0732">Signal</keyword>
<keyword id="KW-0758">Storage protein</keyword>
<name>2SS8_HELAN</name>
<organism>
    <name type="scientific">Helianthus annuus</name>
    <name type="common">Common sunflower</name>
    <dbReference type="NCBI Taxonomy" id="4232"/>
    <lineage>
        <taxon>Eukaryota</taxon>
        <taxon>Viridiplantae</taxon>
        <taxon>Streptophyta</taxon>
        <taxon>Embryophyta</taxon>
        <taxon>Tracheophyta</taxon>
        <taxon>Spermatophyta</taxon>
        <taxon>Magnoliopsida</taxon>
        <taxon>eudicotyledons</taxon>
        <taxon>Gunneridae</taxon>
        <taxon>Pentapetalae</taxon>
        <taxon>asterids</taxon>
        <taxon>campanulids</taxon>
        <taxon>Asterales</taxon>
        <taxon>Asteraceae</taxon>
        <taxon>Asteroideae</taxon>
        <taxon>Heliantheae alliance</taxon>
        <taxon>Heliantheae</taxon>
        <taxon>Helianthus</taxon>
    </lineage>
</organism>
<proteinExistence type="evidence at protein level"/>
<evidence type="ECO:0000269" key="1">
    <source>
    </source>
</evidence>
<evidence type="ECO:0000269" key="2">
    <source>
    </source>
</evidence>
<evidence type="ECO:0000269" key="3">
    <source>
    </source>
</evidence>
<evidence type="ECO:0000305" key="4"/>
<evidence type="ECO:0007829" key="5">
    <source>
        <dbReference type="PDB" id="1S6D"/>
    </source>
</evidence>
<dbReference type="EMBL" id="X56686">
    <property type="protein sequence ID" value="CAA40015.1"/>
    <property type="molecule type" value="mRNA"/>
</dbReference>
<dbReference type="PIR" id="S14259">
    <property type="entry name" value="S14259"/>
</dbReference>
<dbReference type="PDB" id="1S6D">
    <property type="method" value="NMR"/>
    <property type="chains" value="A=39-141"/>
</dbReference>
<dbReference type="PDBsum" id="1S6D"/>
<dbReference type="SMR" id="P23110"/>
<dbReference type="Allergome" id="772">
    <property type="allergen name" value="Hel a 2S Albumin"/>
</dbReference>
<dbReference type="EvolutionaryTrace" id="P23110"/>
<dbReference type="GO" id="GO:0045735">
    <property type="term" value="F:nutrient reservoir activity"/>
    <property type="evidence" value="ECO:0007669"/>
    <property type="project" value="UniProtKB-KW"/>
</dbReference>
<dbReference type="CDD" id="cd00261">
    <property type="entry name" value="AAI_SS"/>
    <property type="match status" value="1"/>
</dbReference>
<dbReference type="Gene3D" id="1.10.110.10">
    <property type="entry name" value="Plant lipid-transfer and hydrophobic proteins"/>
    <property type="match status" value="1"/>
</dbReference>
<dbReference type="InterPro" id="IPR036312">
    <property type="entry name" value="Bifun_inhib/LTP/seed_sf"/>
</dbReference>
<dbReference type="InterPro" id="IPR016140">
    <property type="entry name" value="Bifunc_inhib/LTP/seed_store"/>
</dbReference>
<dbReference type="InterPro" id="IPR000617">
    <property type="entry name" value="Napin/2SS/CON"/>
</dbReference>
<dbReference type="PANTHER" id="PTHR35496">
    <property type="entry name" value="2S SEED STORAGE PROTEIN 1-RELATED"/>
    <property type="match status" value="1"/>
</dbReference>
<dbReference type="PANTHER" id="PTHR35496:SF4">
    <property type="entry name" value="2S SULFUR-RICH SEED STORAGE PROTEIN 2-LIKE"/>
    <property type="match status" value="1"/>
</dbReference>
<dbReference type="Pfam" id="PF00234">
    <property type="entry name" value="Tryp_alpha_amyl"/>
    <property type="match status" value="1"/>
</dbReference>
<dbReference type="SMART" id="SM00499">
    <property type="entry name" value="AAI"/>
    <property type="match status" value="1"/>
</dbReference>
<dbReference type="SUPFAM" id="SSF47699">
    <property type="entry name" value="Bifunctional inhibitor/lipid-transfer protein/seed storage 2S albumin"/>
    <property type="match status" value="1"/>
</dbReference>
<accession>P23110</accession>
<feature type="signal peptide">
    <location>
        <begin position="1"/>
        <end position="25"/>
    </location>
</feature>
<feature type="propeptide" id="PRO_0000032153" evidence="2 3">
    <location>
        <begin position="26"/>
        <end position="38"/>
    </location>
</feature>
<feature type="chain" id="PRO_0000032154" description="Albumin-8">
    <location>
        <begin position="39"/>
        <end position="141"/>
    </location>
</feature>
<feature type="disulfide bond" evidence="1">
    <location>
        <begin position="49"/>
        <end position="100"/>
    </location>
</feature>
<feature type="disulfide bond" evidence="1">
    <location>
        <begin position="62"/>
        <end position="89"/>
    </location>
</feature>
<feature type="disulfide bond" evidence="1">
    <location>
        <begin position="90"/>
        <end position="132"/>
    </location>
</feature>
<feature type="disulfide bond" evidence="1">
    <location>
        <begin position="102"/>
        <end position="139"/>
    </location>
</feature>
<feature type="sequence conflict" description="In Ref. 2; AA sequence." evidence="4" ref="2">
    <original>M</original>
    <variation>N</variation>
    <location>
        <position position="67"/>
    </location>
</feature>
<feature type="strand" evidence="5">
    <location>
        <begin position="46"/>
        <end position="48"/>
    </location>
</feature>
<feature type="helix" evidence="5">
    <location>
        <begin position="49"/>
        <end position="55"/>
    </location>
</feature>
<feature type="helix" evidence="5">
    <location>
        <begin position="61"/>
        <end position="66"/>
    </location>
</feature>
<feature type="turn" evidence="5">
    <location>
        <begin position="67"/>
        <end position="70"/>
    </location>
</feature>
<feature type="strand" evidence="5">
    <location>
        <begin position="77"/>
        <end position="79"/>
    </location>
</feature>
<feature type="helix" evidence="5">
    <location>
        <begin position="87"/>
        <end position="95"/>
    </location>
</feature>
<feature type="helix" evidence="5">
    <location>
        <begin position="98"/>
        <end position="100"/>
    </location>
</feature>
<feature type="helix" evidence="5">
    <location>
        <begin position="103"/>
        <end position="108"/>
    </location>
</feature>
<feature type="helix" evidence="5">
    <location>
        <begin position="118"/>
        <end position="131"/>
    </location>
</feature>
<feature type="strand" evidence="5">
    <location>
        <begin position="134"/>
        <end position="137"/>
    </location>
</feature>
<comment type="function">
    <text>This is a 2S seed storage protein.</text>
</comment>
<comment type="subunit">
    <text evidence="1">Heterodimer; disulfide-linked.</text>
</comment>
<comment type="similarity">
    <text evidence="4">Belongs to the 2S seed storage albumins family.</text>
</comment>
<reference key="1">
    <citation type="journal article" date="1991" name="Eur. J. Biochem.">
        <title>Amino acid and cDNA sequences of a methionine-rich 2S protein from sunflower seed (Helianthus annuus L.).</title>
        <authorList>
            <person name="Kortt A.A."/>
            <person name="Caldwell J.B."/>
            <person name="Lilley G.G."/>
            <person name="Higgins T.J.V."/>
        </authorList>
    </citation>
    <scope>NUCLEOTIDE SEQUENCE [MRNA]</scope>
    <scope>PROTEIN SEQUENCE OF 39-141</scope>
    <source>
        <tissue>Seed</tissue>
    </source>
</reference>
<reference key="2">
    <citation type="journal article" date="1996" name="FEBS Lett.">
        <title>Disulphide structure of a sunflower seed albumin: conserved and variant disulphide bonds in the cereal prolamin superfamily.</title>
        <authorList>
            <person name="Egorov T.A."/>
            <person name="Odintsova T.I."/>
            <person name="Musolyamov A.K."/>
            <person name="Fido R."/>
            <person name="Tatham A.S."/>
            <person name="Shewry P.R."/>
        </authorList>
    </citation>
    <scope>PROTEIN SEQUENCE OF 39-141</scope>
    <source>
        <strain>cv. Hybrid 246</strain>
        <tissue>Seed</tissue>
    </source>
</reference>
<reference key="3">
    <citation type="journal article" date="2004" name="Biochemistry">
        <title>Solution structure of a methionine-rich 2S albumin from sunflower seeds: relationship to its allergenic and emulsifying properties.</title>
        <authorList>
            <person name="Pantoja-Uceda D."/>
            <person name="Shewry P.R."/>
            <person name="Bruix M."/>
            <person name="Tatham A.S."/>
            <person name="Santoro J."/>
            <person name="Rico M."/>
        </authorList>
    </citation>
    <scope>STRUCTURE BY NMR OF 39-141</scope>
    <scope>DISULFIDE BONDS</scope>
</reference>